<organism>
    <name type="scientific">Salmonella paratyphi A (strain ATCC 9150 / SARB42)</name>
    <dbReference type="NCBI Taxonomy" id="295319"/>
    <lineage>
        <taxon>Bacteria</taxon>
        <taxon>Pseudomonadati</taxon>
        <taxon>Pseudomonadota</taxon>
        <taxon>Gammaproteobacteria</taxon>
        <taxon>Enterobacterales</taxon>
        <taxon>Enterobacteriaceae</taxon>
        <taxon>Salmonella</taxon>
    </lineage>
</organism>
<name>PEPE_SALPA</name>
<protein>
    <recommendedName>
        <fullName evidence="1">Peptidase E</fullName>
        <ecNumber evidence="1">3.4.13.21</ecNumber>
    </recommendedName>
    <alternativeName>
        <fullName evidence="1">Alpha-aspartyl dipeptidase</fullName>
    </alternativeName>
    <alternativeName>
        <fullName evidence="1">Asp-specific dipeptidase</fullName>
    </alternativeName>
    <alternativeName>
        <fullName evidence="1">Dipeptidase E</fullName>
    </alternativeName>
</protein>
<sequence length="229" mass="24823">MELLLLSNSTLPGKAWLEHALPLIANQLNGRRSAVFIPFAGVTQTWDEYTDKTAEVLAPLGINVTGIHRVADPLAAIEKAEIIIVGGGNTFQLLKESRERELLAPVADRVKRGALYIGWSAGANLACPTIRTTNDMPIVDPNGFDALDLFPLQINPHFTNALPEGHKGETREQRIRELLVVAPELTVIGLPEGNWIQVSNGQAVLGGPNTTWVFKAGEEAVALEAGHRF</sequence>
<evidence type="ECO:0000255" key="1">
    <source>
        <dbReference type="HAMAP-Rule" id="MF_00510"/>
    </source>
</evidence>
<gene>
    <name evidence="1" type="primary">pepE</name>
    <name type="ordered locus">SPA4028</name>
</gene>
<reference key="1">
    <citation type="journal article" date="2004" name="Nat. Genet.">
        <title>Comparison of genome degradation in Paratyphi A and Typhi, human-restricted serovars of Salmonella enterica that cause typhoid.</title>
        <authorList>
            <person name="McClelland M."/>
            <person name="Sanderson K.E."/>
            <person name="Clifton S.W."/>
            <person name="Latreille P."/>
            <person name="Porwollik S."/>
            <person name="Sabo A."/>
            <person name="Meyer R."/>
            <person name="Bieri T."/>
            <person name="Ozersky P."/>
            <person name="McLellan M."/>
            <person name="Harkins C.R."/>
            <person name="Wang C."/>
            <person name="Nguyen C."/>
            <person name="Berghoff A."/>
            <person name="Elliott G."/>
            <person name="Kohlberg S."/>
            <person name="Strong C."/>
            <person name="Du F."/>
            <person name="Carter J."/>
            <person name="Kremizki C."/>
            <person name="Layman D."/>
            <person name="Leonard S."/>
            <person name="Sun H."/>
            <person name="Fulton L."/>
            <person name="Nash W."/>
            <person name="Miner T."/>
            <person name="Minx P."/>
            <person name="Delehaunty K."/>
            <person name="Fronick C."/>
            <person name="Magrini V."/>
            <person name="Nhan M."/>
            <person name="Warren W."/>
            <person name="Florea L."/>
            <person name="Spieth J."/>
            <person name="Wilson R.K."/>
        </authorList>
    </citation>
    <scope>NUCLEOTIDE SEQUENCE [LARGE SCALE GENOMIC DNA]</scope>
    <source>
        <strain>ATCC 9150 / SARB42</strain>
    </source>
</reference>
<dbReference type="EC" id="3.4.13.21" evidence="1"/>
<dbReference type="EMBL" id="CP000026">
    <property type="protein sequence ID" value="AAV79774.1"/>
    <property type="molecule type" value="Genomic_DNA"/>
</dbReference>
<dbReference type="RefSeq" id="WP_000421773.1">
    <property type="nucleotide sequence ID" value="NC_006511.1"/>
</dbReference>
<dbReference type="SMR" id="Q5PKZ6"/>
<dbReference type="MEROPS" id="S51.001"/>
<dbReference type="KEGG" id="spt:SPA4028"/>
<dbReference type="HOGENOM" id="CLU_071689_0_0_6"/>
<dbReference type="Proteomes" id="UP000008185">
    <property type="component" value="Chromosome"/>
</dbReference>
<dbReference type="GO" id="GO:0005737">
    <property type="term" value="C:cytoplasm"/>
    <property type="evidence" value="ECO:0007669"/>
    <property type="project" value="UniProtKB-SubCell"/>
</dbReference>
<dbReference type="GO" id="GO:0016805">
    <property type="term" value="F:dipeptidase activity"/>
    <property type="evidence" value="ECO:0007669"/>
    <property type="project" value="UniProtKB-UniRule"/>
</dbReference>
<dbReference type="GO" id="GO:0008236">
    <property type="term" value="F:serine-type peptidase activity"/>
    <property type="evidence" value="ECO:0007669"/>
    <property type="project" value="UniProtKB-KW"/>
</dbReference>
<dbReference type="GO" id="GO:0006508">
    <property type="term" value="P:proteolysis"/>
    <property type="evidence" value="ECO:0007669"/>
    <property type="project" value="UniProtKB-UniRule"/>
</dbReference>
<dbReference type="CDD" id="cd03146">
    <property type="entry name" value="GAT1_Peptidase_E"/>
    <property type="match status" value="1"/>
</dbReference>
<dbReference type="FunFam" id="3.40.50.880:FF:000007">
    <property type="entry name" value="Peptidase E"/>
    <property type="match status" value="1"/>
</dbReference>
<dbReference type="Gene3D" id="3.40.50.880">
    <property type="match status" value="1"/>
</dbReference>
<dbReference type="HAMAP" id="MF_00510">
    <property type="entry name" value="Peptidase_E"/>
    <property type="match status" value="1"/>
</dbReference>
<dbReference type="InterPro" id="IPR029062">
    <property type="entry name" value="Class_I_gatase-like"/>
</dbReference>
<dbReference type="InterPro" id="IPR005320">
    <property type="entry name" value="Peptidase_S51"/>
</dbReference>
<dbReference type="InterPro" id="IPR023172">
    <property type="entry name" value="Peptidase_S51_dipeptidase-E"/>
</dbReference>
<dbReference type="NCBIfam" id="NF003642">
    <property type="entry name" value="PRK05282.1"/>
    <property type="match status" value="1"/>
</dbReference>
<dbReference type="PANTHER" id="PTHR20842:SF0">
    <property type="entry name" value="ALPHA-ASPARTYL DIPEPTIDASE"/>
    <property type="match status" value="1"/>
</dbReference>
<dbReference type="PANTHER" id="PTHR20842">
    <property type="entry name" value="PROTEASE S51 ALPHA-ASPARTYL DIPEPTIDASE"/>
    <property type="match status" value="1"/>
</dbReference>
<dbReference type="Pfam" id="PF03575">
    <property type="entry name" value="Peptidase_S51"/>
    <property type="match status" value="1"/>
</dbReference>
<dbReference type="SUPFAM" id="SSF52317">
    <property type="entry name" value="Class I glutamine amidotransferase-like"/>
    <property type="match status" value="1"/>
</dbReference>
<proteinExistence type="inferred from homology"/>
<feature type="chain" id="PRO_0000258596" description="Peptidase E">
    <location>
        <begin position="1"/>
        <end position="229"/>
    </location>
</feature>
<feature type="active site" description="Charge relay system" evidence="1">
    <location>
        <position position="120"/>
    </location>
</feature>
<feature type="active site" description="Charge relay system" evidence="1">
    <location>
        <position position="135"/>
    </location>
</feature>
<feature type="active site" description="Charge relay system" evidence="1">
    <location>
        <position position="157"/>
    </location>
</feature>
<keyword id="KW-0963">Cytoplasm</keyword>
<keyword id="KW-0224">Dipeptidase</keyword>
<keyword id="KW-0378">Hydrolase</keyword>
<keyword id="KW-0645">Protease</keyword>
<keyword id="KW-0720">Serine protease</keyword>
<accession>Q5PKZ6</accession>
<comment type="function">
    <text evidence="1">Hydrolyzes dipeptides containing N-terminal aspartate residues. May play a role in allowing the cell to use peptide aspartate to spare carbon otherwise required for the synthesis of the aspartate family of amino acids.</text>
</comment>
<comment type="catalytic activity">
    <reaction evidence="1">
        <text>Dipeptidase E catalyzes the hydrolysis of dipeptides Asp-|-Xaa. It does not act on peptides with N-terminal Glu, Asn or Gln, nor does it cleave isoaspartyl peptides.</text>
        <dbReference type="EC" id="3.4.13.21"/>
    </reaction>
</comment>
<comment type="subcellular location">
    <subcellularLocation>
        <location evidence="1">Cytoplasm</location>
    </subcellularLocation>
</comment>
<comment type="similarity">
    <text evidence="1">Belongs to the peptidase S51 family.</text>
</comment>